<dbReference type="EC" id="2.1.1.-" evidence="3"/>
<dbReference type="EMBL" id="KL659308">
    <property type="protein sequence ID" value="KFA70066.1"/>
    <property type="molecule type" value="Genomic_DNA"/>
</dbReference>
<dbReference type="SMR" id="A0A084R1I1"/>
<dbReference type="HOGENOM" id="CLU_005533_5_0_1"/>
<dbReference type="InParanoid" id="A0A084R1I1"/>
<dbReference type="OMA" id="TGHMEAW"/>
<dbReference type="OrthoDB" id="2410195at2759"/>
<dbReference type="Proteomes" id="UP000028524">
    <property type="component" value="Unassembled WGS sequence"/>
</dbReference>
<dbReference type="GO" id="GO:0008171">
    <property type="term" value="F:O-methyltransferase activity"/>
    <property type="evidence" value="ECO:0007669"/>
    <property type="project" value="InterPro"/>
</dbReference>
<dbReference type="GO" id="GO:0032259">
    <property type="term" value="P:methylation"/>
    <property type="evidence" value="ECO:0007669"/>
    <property type="project" value="UniProtKB-KW"/>
</dbReference>
<dbReference type="GO" id="GO:0044550">
    <property type="term" value="P:secondary metabolite biosynthetic process"/>
    <property type="evidence" value="ECO:0007669"/>
    <property type="project" value="UniProtKB-ARBA"/>
</dbReference>
<dbReference type="Gene3D" id="3.40.50.150">
    <property type="entry name" value="Vaccinia Virus protein VP39"/>
    <property type="match status" value="1"/>
</dbReference>
<dbReference type="Gene3D" id="1.10.10.10">
    <property type="entry name" value="Winged helix-like DNA-binding domain superfamily/Winged helix DNA-binding domain"/>
    <property type="match status" value="1"/>
</dbReference>
<dbReference type="InterPro" id="IPR016461">
    <property type="entry name" value="COMT-like"/>
</dbReference>
<dbReference type="InterPro" id="IPR001077">
    <property type="entry name" value="O_MeTrfase_dom"/>
</dbReference>
<dbReference type="InterPro" id="IPR029063">
    <property type="entry name" value="SAM-dependent_MTases_sf"/>
</dbReference>
<dbReference type="InterPro" id="IPR036388">
    <property type="entry name" value="WH-like_DNA-bd_sf"/>
</dbReference>
<dbReference type="InterPro" id="IPR036390">
    <property type="entry name" value="WH_DNA-bd_sf"/>
</dbReference>
<dbReference type="PANTHER" id="PTHR43712:SF8">
    <property type="entry name" value="O-METHYLTRANSFERASE AF390-400"/>
    <property type="match status" value="1"/>
</dbReference>
<dbReference type="PANTHER" id="PTHR43712">
    <property type="entry name" value="PUTATIVE (AFU_ORTHOLOGUE AFUA_4G14580)-RELATED"/>
    <property type="match status" value="1"/>
</dbReference>
<dbReference type="Pfam" id="PF00891">
    <property type="entry name" value="Methyltransf_2"/>
    <property type="match status" value="1"/>
</dbReference>
<dbReference type="SUPFAM" id="SSF53335">
    <property type="entry name" value="S-adenosyl-L-methionine-dependent methyltransferases"/>
    <property type="match status" value="1"/>
</dbReference>
<dbReference type="SUPFAM" id="SSF46785">
    <property type="entry name" value="Winged helix' DNA-binding domain"/>
    <property type="match status" value="1"/>
</dbReference>
<dbReference type="PROSITE" id="PS51683">
    <property type="entry name" value="SAM_OMT_II"/>
    <property type="match status" value="1"/>
</dbReference>
<name>ATR12_STAC4</name>
<sequence length="391" mass="43506">MASSVATLVKSLDKINAADFESDEAARVNAIAAAQKMIHRLQSGVERGIELTHQRSTVFPIIDVFEDLGLWEAWASQGHEISLEGLAQLSNTPLALNLLRRLCRLLTAADIFEEKSEDCYTPTELSLYMGDKTKGSQVSQGSAPGWVGSYTNLPIFLKETAYQEPLDPKKSAYSKTAGKSFWEELSQDPLQQENFGRFMSSWAKFKVPWPAFYDTESLVRGAEPGMPILVDIGGNDGTDVERFLAKHPGVAAGSLILQDRPAALKLAKVDQKIELMPHDFFTPQPVIGSRAYFFHAVLHDWDDAHALDILRNTVPAMRKGYSKLLILDIAIPRTGASLIQAAMDISMMSLLSSLERPITTWEILLKKAGLKIVKFWPDPRRYETLIEAELE</sequence>
<accession>A0A084R1I1</accession>
<protein>
    <recommendedName>
        <fullName evidence="4">O-methyltransferase ATR12</fullName>
        <ecNumber evidence="3">2.1.1.-</ecNumber>
    </recommendedName>
    <alternativeName>
        <fullName evidence="4">Core atranone cluster (CAC) protein 12</fullName>
    </alternativeName>
</protein>
<feature type="chain" id="PRO_0000442407" description="O-methyltransferase ATR12">
    <location>
        <begin position="1"/>
        <end position="391"/>
    </location>
</feature>
<feature type="active site" description="Proton acceptor" evidence="3">
    <location>
        <position position="299"/>
    </location>
</feature>
<feature type="binding site" evidence="1">
    <location>
        <begin position="233"/>
        <end position="234"/>
    </location>
    <ligand>
        <name>S-adenosyl-L-methionine</name>
        <dbReference type="ChEBI" id="CHEBI:59789"/>
    </ligand>
</feature>
<feature type="binding site" evidence="3">
    <location>
        <position position="259"/>
    </location>
    <ligand>
        <name>S-adenosyl-L-methionine</name>
        <dbReference type="ChEBI" id="CHEBI:59789"/>
    </ligand>
</feature>
<feature type="binding site" evidence="1">
    <location>
        <begin position="279"/>
        <end position="280"/>
    </location>
    <ligand>
        <name>S-adenosyl-L-methionine</name>
        <dbReference type="ChEBI" id="CHEBI:59789"/>
    </ligand>
</feature>
<comment type="function">
    <text evidence="2 6">O-methyltransferase; part of the core atranone cluster (CAC) which products are predicted to catalyze most or all steps of mycotoxin atranone synthesis, starting from geranylgeranyl pyrophosphate (GGPP) (PubMed:25015739). The initial cyclization of GGPP to dolabellane is probably performed by the terpene cyclase ATR13 (PubMed:25015739). The Baeyer-Villiger oxidation near the end of the atranone synthesis, which converts atranones D and E to atranones F and G is predicted to be catalyzed by the monooxygenase ATR8 (PubMed:25015739). Of the CAC's other predicted gene products, the reducing PKS ATR6 might synthesize a polyketide chain (PubMed:25015739). This polyketide is probably transferred onto the atranone backbone by the polyketide transferase ATR5 (By similarity). Other predicted CAC products include 4 oxygenases (ATR2, ATR3, ATR4, and ATR14), 3 short-chain reductases (ATR7, ATR9, and ATR10), and a methyltransferase (ATR12) (PubMed:25015739). These may all be involved in the various steps of atranone biosynthesis, although their specific roles must await experimental determination (PubMed:25015739).</text>
</comment>
<comment type="pathway">
    <text evidence="6">Mycotoxin biosynthesis.</text>
</comment>
<comment type="similarity">
    <text evidence="5">Belongs to the class I-like SAM-binding methyltransferase superfamily. Cation-independent O-methyltransferase family. COMT subfamily.</text>
</comment>
<proteinExistence type="inferred from homology"/>
<organism>
    <name type="scientific">Stachybotrys chlorohalonatus (strain IBT 40285)</name>
    <dbReference type="NCBI Taxonomy" id="1283841"/>
    <lineage>
        <taxon>Eukaryota</taxon>
        <taxon>Fungi</taxon>
        <taxon>Dikarya</taxon>
        <taxon>Ascomycota</taxon>
        <taxon>Pezizomycotina</taxon>
        <taxon>Sordariomycetes</taxon>
        <taxon>Hypocreomycetidae</taxon>
        <taxon>Hypocreales</taxon>
        <taxon>Stachybotryaceae</taxon>
        <taxon>Stachybotrys</taxon>
    </lineage>
</organism>
<gene>
    <name evidence="4" type="primary">ATR12</name>
    <name type="ORF">S40285_03336</name>
</gene>
<reference key="1">
    <citation type="journal article" date="2014" name="BMC Genomics">
        <title>Comparative genome sequencing reveals chemotype-specific gene clusters in the toxigenic black mold Stachybotrys.</title>
        <authorList>
            <person name="Semeiks J."/>
            <person name="Borek D."/>
            <person name="Otwinowski Z."/>
            <person name="Grishin N.V."/>
        </authorList>
    </citation>
    <scope>NUCLEOTIDE SEQUENCE [LARGE SCALE GENOMIC DNA]</scope>
    <scope>IDENTIFICATION</scope>
    <scope>FUNCTION</scope>
    <scope>PATHWAY</scope>
    <source>
        <strain>IBT 40285</strain>
    </source>
</reference>
<evidence type="ECO:0000250" key="1">
    <source>
        <dbReference type="UniProtKB" id="O04385"/>
    </source>
</evidence>
<evidence type="ECO:0000250" key="2">
    <source>
        <dbReference type="UniProtKB" id="Q4WAY4"/>
    </source>
</evidence>
<evidence type="ECO:0000255" key="3">
    <source>
        <dbReference type="PROSITE-ProRule" id="PRU01020"/>
    </source>
</evidence>
<evidence type="ECO:0000303" key="4">
    <source>
    </source>
</evidence>
<evidence type="ECO:0000305" key="5"/>
<evidence type="ECO:0000305" key="6">
    <source>
    </source>
</evidence>
<keyword id="KW-0489">Methyltransferase</keyword>
<keyword id="KW-1185">Reference proteome</keyword>
<keyword id="KW-0949">S-adenosyl-L-methionine</keyword>
<keyword id="KW-0808">Transferase</keyword>